<accession>Q8UEP4</accession>
<feature type="chain" id="PRO_0000151522" description="Arginine--tRNA ligase">
    <location>
        <begin position="1"/>
        <end position="585"/>
    </location>
</feature>
<feature type="short sequence motif" description="'HIGH' region">
    <location>
        <begin position="131"/>
        <end position="141"/>
    </location>
</feature>
<reference key="1">
    <citation type="journal article" date="2001" name="Science">
        <title>The genome of the natural genetic engineer Agrobacterium tumefaciens C58.</title>
        <authorList>
            <person name="Wood D.W."/>
            <person name="Setubal J.C."/>
            <person name="Kaul R."/>
            <person name="Monks D.E."/>
            <person name="Kitajima J.P."/>
            <person name="Okura V.K."/>
            <person name="Zhou Y."/>
            <person name="Chen L."/>
            <person name="Wood G.E."/>
            <person name="Almeida N.F. Jr."/>
            <person name="Woo L."/>
            <person name="Chen Y."/>
            <person name="Paulsen I.T."/>
            <person name="Eisen J.A."/>
            <person name="Karp P.D."/>
            <person name="Bovee D. Sr."/>
            <person name="Chapman P."/>
            <person name="Clendenning J."/>
            <person name="Deatherage G."/>
            <person name="Gillet W."/>
            <person name="Grant C."/>
            <person name="Kutyavin T."/>
            <person name="Levy R."/>
            <person name="Li M.-J."/>
            <person name="McClelland E."/>
            <person name="Palmieri A."/>
            <person name="Raymond C."/>
            <person name="Rouse G."/>
            <person name="Saenphimmachak C."/>
            <person name="Wu Z."/>
            <person name="Romero P."/>
            <person name="Gordon D."/>
            <person name="Zhang S."/>
            <person name="Yoo H."/>
            <person name="Tao Y."/>
            <person name="Biddle P."/>
            <person name="Jung M."/>
            <person name="Krespan W."/>
            <person name="Perry M."/>
            <person name="Gordon-Kamm B."/>
            <person name="Liao L."/>
            <person name="Kim S."/>
            <person name="Hendrick C."/>
            <person name="Zhao Z.-Y."/>
            <person name="Dolan M."/>
            <person name="Chumley F."/>
            <person name="Tingey S.V."/>
            <person name="Tomb J.-F."/>
            <person name="Gordon M.P."/>
            <person name="Olson M.V."/>
            <person name="Nester E.W."/>
        </authorList>
    </citation>
    <scope>NUCLEOTIDE SEQUENCE [LARGE SCALE GENOMIC DNA]</scope>
    <source>
        <strain>C58 / ATCC 33970</strain>
    </source>
</reference>
<reference key="2">
    <citation type="journal article" date="2001" name="Science">
        <title>Genome sequence of the plant pathogen and biotechnology agent Agrobacterium tumefaciens C58.</title>
        <authorList>
            <person name="Goodner B."/>
            <person name="Hinkle G."/>
            <person name="Gattung S."/>
            <person name="Miller N."/>
            <person name="Blanchard M."/>
            <person name="Qurollo B."/>
            <person name="Goldman B.S."/>
            <person name="Cao Y."/>
            <person name="Askenazi M."/>
            <person name="Halling C."/>
            <person name="Mullin L."/>
            <person name="Houmiel K."/>
            <person name="Gordon J."/>
            <person name="Vaudin M."/>
            <person name="Iartchouk O."/>
            <person name="Epp A."/>
            <person name="Liu F."/>
            <person name="Wollam C."/>
            <person name="Allinger M."/>
            <person name="Doughty D."/>
            <person name="Scott C."/>
            <person name="Lappas C."/>
            <person name="Markelz B."/>
            <person name="Flanagan C."/>
            <person name="Crowell C."/>
            <person name="Gurson J."/>
            <person name="Lomo C."/>
            <person name="Sear C."/>
            <person name="Strub G."/>
            <person name="Cielo C."/>
            <person name="Slater S."/>
        </authorList>
    </citation>
    <scope>NUCLEOTIDE SEQUENCE [LARGE SCALE GENOMIC DNA]</scope>
    <source>
        <strain>C58 / ATCC 33970</strain>
    </source>
</reference>
<proteinExistence type="inferred from homology"/>
<name>SYR_AGRFC</name>
<comment type="catalytic activity">
    <reaction evidence="1">
        <text>tRNA(Arg) + L-arginine + ATP = L-arginyl-tRNA(Arg) + AMP + diphosphate</text>
        <dbReference type="Rhea" id="RHEA:20301"/>
        <dbReference type="Rhea" id="RHEA-COMP:9658"/>
        <dbReference type="Rhea" id="RHEA-COMP:9673"/>
        <dbReference type="ChEBI" id="CHEBI:30616"/>
        <dbReference type="ChEBI" id="CHEBI:32682"/>
        <dbReference type="ChEBI" id="CHEBI:33019"/>
        <dbReference type="ChEBI" id="CHEBI:78442"/>
        <dbReference type="ChEBI" id="CHEBI:78513"/>
        <dbReference type="ChEBI" id="CHEBI:456215"/>
        <dbReference type="EC" id="6.1.1.19"/>
    </reaction>
</comment>
<comment type="subunit">
    <text evidence="1">Monomer.</text>
</comment>
<comment type="subcellular location">
    <subcellularLocation>
        <location evidence="1">Cytoplasm</location>
    </subcellularLocation>
</comment>
<comment type="similarity">
    <text evidence="1">Belongs to the class-I aminoacyl-tRNA synthetase family.</text>
</comment>
<organism>
    <name type="scientific">Agrobacterium fabrum (strain C58 / ATCC 33970)</name>
    <name type="common">Agrobacterium tumefaciens (strain C58)</name>
    <dbReference type="NCBI Taxonomy" id="176299"/>
    <lineage>
        <taxon>Bacteria</taxon>
        <taxon>Pseudomonadati</taxon>
        <taxon>Pseudomonadota</taxon>
        <taxon>Alphaproteobacteria</taxon>
        <taxon>Hyphomicrobiales</taxon>
        <taxon>Rhizobiaceae</taxon>
        <taxon>Rhizobium/Agrobacterium group</taxon>
        <taxon>Agrobacterium</taxon>
        <taxon>Agrobacterium tumefaciens complex</taxon>
    </lineage>
</organism>
<protein>
    <recommendedName>
        <fullName evidence="1">Arginine--tRNA ligase</fullName>
        <ecNumber evidence="1">6.1.1.19</ecNumber>
    </recommendedName>
    <alternativeName>
        <fullName evidence="1">Arginyl-tRNA synthetase</fullName>
        <shortName evidence="1">ArgRS</shortName>
    </alternativeName>
</protein>
<dbReference type="EC" id="6.1.1.19" evidence="1"/>
<dbReference type="EMBL" id="AE007869">
    <property type="protein sequence ID" value="AAK87484.1"/>
    <property type="molecule type" value="Genomic_DNA"/>
</dbReference>
<dbReference type="PIR" id="AI2786">
    <property type="entry name" value="AI2786"/>
</dbReference>
<dbReference type="PIR" id="C97566">
    <property type="entry name" value="C97566"/>
</dbReference>
<dbReference type="RefSeq" id="NP_354699.1">
    <property type="nucleotide sequence ID" value="NC_003062.2"/>
</dbReference>
<dbReference type="RefSeq" id="WP_010971816.1">
    <property type="nucleotide sequence ID" value="NC_003062.2"/>
</dbReference>
<dbReference type="SMR" id="Q8UEP4"/>
<dbReference type="STRING" id="176299.Atu1711"/>
<dbReference type="EnsemblBacteria" id="AAK87484">
    <property type="protein sequence ID" value="AAK87484"/>
    <property type="gene ID" value="Atu1711"/>
</dbReference>
<dbReference type="GeneID" id="1133749"/>
<dbReference type="KEGG" id="atu:Atu1711"/>
<dbReference type="PATRIC" id="fig|176299.10.peg.1726"/>
<dbReference type="eggNOG" id="COG0018">
    <property type="taxonomic scope" value="Bacteria"/>
</dbReference>
<dbReference type="HOGENOM" id="CLU_006406_0_1_5"/>
<dbReference type="OrthoDB" id="9803211at2"/>
<dbReference type="PhylomeDB" id="Q8UEP4"/>
<dbReference type="BioCyc" id="AGRO:ATU1711-MONOMER"/>
<dbReference type="Proteomes" id="UP000000813">
    <property type="component" value="Chromosome circular"/>
</dbReference>
<dbReference type="GO" id="GO:0005737">
    <property type="term" value="C:cytoplasm"/>
    <property type="evidence" value="ECO:0007669"/>
    <property type="project" value="UniProtKB-SubCell"/>
</dbReference>
<dbReference type="GO" id="GO:0004814">
    <property type="term" value="F:arginine-tRNA ligase activity"/>
    <property type="evidence" value="ECO:0007669"/>
    <property type="project" value="UniProtKB-UniRule"/>
</dbReference>
<dbReference type="GO" id="GO:0005524">
    <property type="term" value="F:ATP binding"/>
    <property type="evidence" value="ECO:0007669"/>
    <property type="project" value="UniProtKB-UniRule"/>
</dbReference>
<dbReference type="GO" id="GO:0006420">
    <property type="term" value="P:arginyl-tRNA aminoacylation"/>
    <property type="evidence" value="ECO:0007669"/>
    <property type="project" value="UniProtKB-UniRule"/>
</dbReference>
<dbReference type="CDD" id="cd00671">
    <property type="entry name" value="ArgRS_core"/>
    <property type="match status" value="1"/>
</dbReference>
<dbReference type="FunFam" id="1.10.730.10:FF:000008">
    <property type="entry name" value="Arginine--tRNA ligase"/>
    <property type="match status" value="1"/>
</dbReference>
<dbReference type="Gene3D" id="3.30.1360.70">
    <property type="entry name" value="Arginyl tRNA synthetase N-terminal domain"/>
    <property type="match status" value="1"/>
</dbReference>
<dbReference type="Gene3D" id="3.40.50.620">
    <property type="entry name" value="HUPs"/>
    <property type="match status" value="1"/>
</dbReference>
<dbReference type="Gene3D" id="1.10.730.10">
    <property type="entry name" value="Isoleucyl-tRNA Synthetase, Domain 1"/>
    <property type="match status" value="1"/>
</dbReference>
<dbReference type="HAMAP" id="MF_00123">
    <property type="entry name" value="Arg_tRNA_synth"/>
    <property type="match status" value="1"/>
</dbReference>
<dbReference type="InterPro" id="IPR001412">
    <property type="entry name" value="aa-tRNA-synth_I_CS"/>
</dbReference>
<dbReference type="InterPro" id="IPR001278">
    <property type="entry name" value="Arg-tRNA-ligase"/>
</dbReference>
<dbReference type="InterPro" id="IPR005148">
    <property type="entry name" value="Arg-tRNA-synth_N"/>
</dbReference>
<dbReference type="InterPro" id="IPR036695">
    <property type="entry name" value="Arg-tRNA-synth_N_sf"/>
</dbReference>
<dbReference type="InterPro" id="IPR035684">
    <property type="entry name" value="ArgRS_core"/>
</dbReference>
<dbReference type="InterPro" id="IPR008909">
    <property type="entry name" value="DALR_anticod-bd"/>
</dbReference>
<dbReference type="InterPro" id="IPR014729">
    <property type="entry name" value="Rossmann-like_a/b/a_fold"/>
</dbReference>
<dbReference type="InterPro" id="IPR009080">
    <property type="entry name" value="tRNAsynth_Ia_anticodon-bd"/>
</dbReference>
<dbReference type="NCBIfam" id="TIGR00456">
    <property type="entry name" value="argS"/>
    <property type="match status" value="1"/>
</dbReference>
<dbReference type="PANTHER" id="PTHR11956:SF5">
    <property type="entry name" value="ARGININE--TRNA LIGASE, CYTOPLASMIC"/>
    <property type="match status" value="1"/>
</dbReference>
<dbReference type="PANTHER" id="PTHR11956">
    <property type="entry name" value="ARGINYL-TRNA SYNTHETASE"/>
    <property type="match status" value="1"/>
</dbReference>
<dbReference type="Pfam" id="PF03485">
    <property type="entry name" value="Arg_tRNA_synt_N"/>
    <property type="match status" value="1"/>
</dbReference>
<dbReference type="Pfam" id="PF05746">
    <property type="entry name" value="DALR_1"/>
    <property type="match status" value="1"/>
</dbReference>
<dbReference type="Pfam" id="PF00750">
    <property type="entry name" value="tRNA-synt_1d"/>
    <property type="match status" value="2"/>
</dbReference>
<dbReference type="PRINTS" id="PR01038">
    <property type="entry name" value="TRNASYNTHARG"/>
</dbReference>
<dbReference type="SMART" id="SM01016">
    <property type="entry name" value="Arg_tRNA_synt_N"/>
    <property type="match status" value="1"/>
</dbReference>
<dbReference type="SMART" id="SM00836">
    <property type="entry name" value="DALR_1"/>
    <property type="match status" value="1"/>
</dbReference>
<dbReference type="SUPFAM" id="SSF47323">
    <property type="entry name" value="Anticodon-binding domain of a subclass of class I aminoacyl-tRNA synthetases"/>
    <property type="match status" value="1"/>
</dbReference>
<dbReference type="SUPFAM" id="SSF55190">
    <property type="entry name" value="Arginyl-tRNA synthetase (ArgRS), N-terminal 'additional' domain"/>
    <property type="match status" value="1"/>
</dbReference>
<dbReference type="SUPFAM" id="SSF52374">
    <property type="entry name" value="Nucleotidylyl transferase"/>
    <property type="match status" value="1"/>
</dbReference>
<dbReference type="PROSITE" id="PS00178">
    <property type="entry name" value="AA_TRNA_LIGASE_I"/>
    <property type="match status" value="1"/>
</dbReference>
<gene>
    <name evidence="1" type="primary">argS</name>
    <name type="ordered locus">Atu1711</name>
    <name type="ORF">AGR_C_3144</name>
</gene>
<keyword id="KW-0030">Aminoacyl-tRNA synthetase</keyword>
<keyword id="KW-0067">ATP-binding</keyword>
<keyword id="KW-0963">Cytoplasm</keyword>
<keyword id="KW-0436">Ligase</keyword>
<keyword id="KW-0547">Nucleotide-binding</keyword>
<keyword id="KW-0648">Protein biosynthesis</keyword>
<keyword id="KW-1185">Reference proteome</keyword>
<sequence>MNIFADFDTRIKNALETLDLVKENREKVDFSRITVESPRDLSHGDVATNAAMVLAKPLGTNPRALAELLVPALQADGDVDGVNVAGPGFINLKVSVGYWQRLLADMIGQGVDFGRSTVGAGQKINVEYVSANPTGPMHVGHCRGAVVGDTLANLLAFAGYGVTKEYYINDAGSQIDVLARSVFLRYREALGEDIGSIPSGLYPGDYLVPVGQALADEYGIKLRAMPEEKWLPIVKDKAIDAMMVMIREDLALLNVRHDVFFSERTLHEGNGGPILSAINDLTFKGHVYKGTLPPPKGELPDDWEDREQTLFRSTEVGDDMDRALMKSDGSYTYFAADVAYFKNKFDRGFSEMIYVLGADHGGYVKRLEAVARAVSEGKSKLTVLLCQLVKLFRDGEPVKMSKRSGDFVTLRDVVDEVGRDPVRFMMLYRKNSEPLDFDFAKVTEQSKDNPVFYVQYAHARCKSIFRQAQEAFPGLAPSAEDMAASVALISDINELQLVAKLAEYPRLIESAALSHEPHRLAFYLYDLAGSFHGHWNKGKDHQELRFINDKNRELSIARLGLVNAVANVLKSGLTLLGADAPDEMR</sequence>
<evidence type="ECO:0000255" key="1">
    <source>
        <dbReference type="HAMAP-Rule" id="MF_00123"/>
    </source>
</evidence>